<name>VSR6_ARATH</name>
<accession>Q9FYH7</accession>
<accession>F4I7T2</accession>
<organism>
    <name type="scientific">Arabidopsis thaliana</name>
    <name type="common">Mouse-ear cress</name>
    <dbReference type="NCBI Taxonomy" id="3702"/>
    <lineage>
        <taxon>Eukaryota</taxon>
        <taxon>Viridiplantae</taxon>
        <taxon>Streptophyta</taxon>
        <taxon>Embryophyta</taxon>
        <taxon>Tracheophyta</taxon>
        <taxon>Spermatophyta</taxon>
        <taxon>Magnoliopsida</taxon>
        <taxon>eudicotyledons</taxon>
        <taxon>Gunneridae</taxon>
        <taxon>Pentapetalae</taxon>
        <taxon>rosids</taxon>
        <taxon>malvids</taxon>
        <taxon>Brassicales</taxon>
        <taxon>Brassicaceae</taxon>
        <taxon>Camelineae</taxon>
        <taxon>Arabidopsis</taxon>
    </lineage>
</organism>
<sequence length="631" mass="70258">MSLIHKGATLALFLALTMVVNGVFGRFIVEKSSVTILNPLAMRSKHDAAIANFGVPNYGGYMIGSVVYAGQGAYGCDSFDKTFKPKFPRPTILIIDRGECYFALKVWNGQQSGVAAVLVADNVDEPLITMDSPEESKEADDFIEKLNIPSALIDFSFANTLKQALKKGEEVVLKIDWSESLPHPDERVEYELWTNTNDECGARCDEQMNFVKNFKGHAQILEKGGYSLFTPHYITWFCPKDYVSSNQCKSQCINQGRYCAPDPEQDFGDGYDGKDIVFENLRQLCVHKVAKENNRSWVWWDYVTDFHIRCSMKEKKYSKECAERVVESLGLPLDKIKKCIGDPDANVENEVLKAEQALQVGQGDRGDVTILPTLIVNNAQYRGKLERNAVLKAICSGFKERTEPGICLSGDIETNECLEANGGCWEDKKSNVTACKDTFRGRVCECPVVNGVQYKGDGYTSCEPYGPARCSINQGGCWSETKKGLTFSACSNLETSGCRCPPGFKGDGLKCEDIDECKEQSACQCDGCNCKNKWGGFECKCSGNRLYMKEQDTCIERSGSRIGWFPTFVILAAVASICVGGYVFYKYRLRSYMDSEIMAIMSQYMPLESQNTTDPMTGESQHQQLRLTSAA</sequence>
<gene>
    <name type="primary">VSR6</name>
    <name type="synonym">BP80D</name>
    <name type="synonym">ELP6</name>
    <name type="ordered locus">At1g30900</name>
    <name type="ORF">F17F8.23</name>
</gene>
<protein>
    <recommendedName>
        <fullName>Vacuolar-sorting receptor 6</fullName>
        <shortName>AtVSR6</shortName>
    </recommendedName>
    <alternativeName>
        <fullName>BP80-like protein d</fullName>
        <shortName>AtBP80d</shortName>
    </alternativeName>
    <alternativeName>
        <fullName>Epidermal growth factor receptor-like protein 6</fullName>
        <shortName>AtELP6</shortName>
    </alternativeName>
</protein>
<reference key="1">
    <citation type="journal article" date="2000" name="Nature">
        <title>Sequence and analysis of chromosome 1 of the plant Arabidopsis thaliana.</title>
        <authorList>
            <person name="Theologis A."/>
            <person name="Ecker J.R."/>
            <person name="Palm C.J."/>
            <person name="Federspiel N.A."/>
            <person name="Kaul S."/>
            <person name="White O."/>
            <person name="Alonso J."/>
            <person name="Altafi H."/>
            <person name="Araujo R."/>
            <person name="Bowman C.L."/>
            <person name="Brooks S.Y."/>
            <person name="Buehler E."/>
            <person name="Chan A."/>
            <person name="Chao Q."/>
            <person name="Chen H."/>
            <person name="Cheuk R.F."/>
            <person name="Chin C.W."/>
            <person name="Chung M.K."/>
            <person name="Conn L."/>
            <person name="Conway A.B."/>
            <person name="Conway A.R."/>
            <person name="Creasy T.H."/>
            <person name="Dewar K."/>
            <person name="Dunn P."/>
            <person name="Etgu P."/>
            <person name="Feldblyum T.V."/>
            <person name="Feng J.-D."/>
            <person name="Fong B."/>
            <person name="Fujii C.Y."/>
            <person name="Gill J.E."/>
            <person name="Goldsmith A.D."/>
            <person name="Haas B."/>
            <person name="Hansen N.F."/>
            <person name="Hughes B."/>
            <person name="Huizar L."/>
            <person name="Hunter J.L."/>
            <person name="Jenkins J."/>
            <person name="Johnson-Hopson C."/>
            <person name="Khan S."/>
            <person name="Khaykin E."/>
            <person name="Kim C.J."/>
            <person name="Koo H.L."/>
            <person name="Kremenetskaia I."/>
            <person name="Kurtz D.B."/>
            <person name="Kwan A."/>
            <person name="Lam B."/>
            <person name="Langin-Hooper S."/>
            <person name="Lee A."/>
            <person name="Lee J.M."/>
            <person name="Lenz C.A."/>
            <person name="Li J.H."/>
            <person name="Li Y.-P."/>
            <person name="Lin X."/>
            <person name="Liu S.X."/>
            <person name="Liu Z.A."/>
            <person name="Luros J.S."/>
            <person name="Maiti R."/>
            <person name="Marziali A."/>
            <person name="Militscher J."/>
            <person name="Miranda M."/>
            <person name="Nguyen M."/>
            <person name="Nierman W.C."/>
            <person name="Osborne B.I."/>
            <person name="Pai G."/>
            <person name="Peterson J."/>
            <person name="Pham P.K."/>
            <person name="Rizzo M."/>
            <person name="Rooney T."/>
            <person name="Rowley D."/>
            <person name="Sakano H."/>
            <person name="Salzberg S.L."/>
            <person name="Schwartz J.R."/>
            <person name="Shinn P."/>
            <person name="Southwick A.M."/>
            <person name="Sun H."/>
            <person name="Tallon L.J."/>
            <person name="Tambunga G."/>
            <person name="Toriumi M.J."/>
            <person name="Town C.D."/>
            <person name="Utterback T."/>
            <person name="Van Aken S."/>
            <person name="Vaysberg M."/>
            <person name="Vysotskaia V.S."/>
            <person name="Walker M."/>
            <person name="Wu D."/>
            <person name="Yu G."/>
            <person name="Fraser C.M."/>
            <person name="Venter J.C."/>
            <person name="Davis R.W."/>
        </authorList>
    </citation>
    <scope>NUCLEOTIDE SEQUENCE [LARGE SCALE GENOMIC DNA]</scope>
    <source>
        <strain>cv. Columbia</strain>
    </source>
</reference>
<reference key="2">
    <citation type="journal article" date="2017" name="Plant J.">
        <title>Araport11: a complete reannotation of the Arabidopsis thaliana reference genome.</title>
        <authorList>
            <person name="Cheng C.Y."/>
            <person name="Krishnakumar V."/>
            <person name="Chan A.P."/>
            <person name="Thibaud-Nissen F."/>
            <person name="Schobel S."/>
            <person name="Town C.D."/>
        </authorList>
    </citation>
    <scope>GENOME REANNOTATION</scope>
    <source>
        <strain>cv. Columbia</strain>
    </source>
</reference>
<reference key="3">
    <citation type="journal article" date="2003" name="J. Exp. Bot.">
        <title>Seed germination is blocked in Arabidopsis putative vacuolar sorting receptor (atbp80) antisense transformants.</title>
        <authorList>
            <person name="Laval V."/>
            <person name="Masclaux F."/>
            <person name="Serin A."/>
            <person name="Carriere M."/>
            <person name="Roldan C."/>
            <person name="Devic M."/>
            <person name="Pont-Lezica R.F."/>
            <person name="Galaud J.-P."/>
        </authorList>
    </citation>
    <scope>TISSUE SPECIFICITY</scope>
</reference>
<reference key="4">
    <citation type="journal article" date="2003" name="Proc. Natl. Acad. Sci. U.S.A.">
        <title>Vacuolar sorting receptor for seed storage proteins in Arabidopsis thaliana.</title>
        <authorList>
            <person name="Shimada T."/>
            <person name="Fuji K."/>
            <person name="Tamura K."/>
            <person name="Kondo M."/>
            <person name="Nishimura M."/>
            <person name="Hara-Nishimura I."/>
        </authorList>
    </citation>
    <scope>GENE FAMILY</scope>
    <scope>NOMENCLATURE</scope>
</reference>
<proteinExistence type="evidence at transcript level"/>
<comment type="function">
    <text evidence="1">Vacuolar-sorting receptor (VSR) involved in clathrin-coated vesicles sorting from Golgi apparatus to vacuoles.</text>
</comment>
<comment type="subcellular location">
    <subcellularLocation>
        <location evidence="1">Membrane</location>
        <topology evidence="1">Single-pass type I membrane protein</topology>
    </subcellularLocation>
    <subcellularLocation>
        <location evidence="1">Golgi apparatus membrane</location>
        <topology evidence="1">Single-pass type I membrane protein</topology>
    </subcellularLocation>
    <subcellularLocation>
        <location evidence="1">Cytoplasmic vesicle</location>
        <location evidence="1">Clathrin-coated vesicle membrane</location>
        <topology evidence="1">Single-pass type I membrane protein</topology>
    </subcellularLocation>
    <subcellularLocation>
        <location evidence="1">Prevacuolar compartment membrane</location>
        <topology evidence="1">Single-pass type I membrane protein</topology>
    </subcellularLocation>
</comment>
<comment type="tissue specificity">
    <text evidence="4">Expressed in seedlings, roots, leaves, flowers and siliques.</text>
</comment>
<comment type="domain">
    <text evidence="1">The tyrosine-based internalization signal may be involved in trafficking at the TGN.</text>
</comment>
<comment type="similarity">
    <text evidence="5">Belongs to the VSR (BP-80) family.</text>
</comment>
<comment type="caution">
    <text evidence="6">Was originally erroneously termed BP80E.</text>
</comment>
<comment type="sequence caution" evidence="5">
    <conflict type="erroneous gene model prediction">
        <sequence resource="EMBL-CDS" id="AAF98196"/>
    </conflict>
</comment>
<dbReference type="EMBL" id="AC000107">
    <property type="protein sequence ID" value="AAF98196.1"/>
    <property type="status" value="ALT_SEQ"/>
    <property type="molecule type" value="Genomic_DNA"/>
</dbReference>
<dbReference type="EMBL" id="CP002684">
    <property type="protein sequence ID" value="AEE31291.1"/>
    <property type="molecule type" value="Genomic_DNA"/>
</dbReference>
<dbReference type="PIR" id="G86434">
    <property type="entry name" value="G86434"/>
</dbReference>
<dbReference type="RefSeq" id="NP_174375.1">
    <property type="nucleotide sequence ID" value="NM_102827.2"/>
</dbReference>
<dbReference type="SMR" id="Q9FYH7"/>
<dbReference type="FunCoup" id="Q9FYH7">
    <property type="interactions" value="16"/>
</dbReference>
<dbReference type="STRING" id="3702.Q9FYH7"/>
<dbReference type="GlyCosmos" id="Q9FYH7">
    <property type="glycosylation" value="2 sites, No reported glycans"/>
</dbReference>
<dbReference type="GlyGen" id="Q9FYH7">
    <property type="glycosylation" value="2 sites"/>
</dbReference>
<dbReference type="PaxDb" id="3702-AT1G30900.1"/>
<dbReference type="ProteomicsDB" id="242323"/>
<dbReference type="EnsemblPlants" id="AT1G30900.1">
    <property type="protein sequence ID" value="AT1G30900.1"/>
    <property type="gene ID" value="AT1G30900"/>
</dbReference>
<dbReference type="GeneID" id="839974"/>
<dbReference type="Gramene" id="AT1G30900.1">
    <property type="protein sequence ID" value="AT1G30900.1"/>
    <property type="gene ID" value="AT1G30900"/>
</dbReference>
<dbReference type="KEGG" id="ath:AT1G30900"/>
<dbReference type="Araport" id="AT1G30900"/>
<dbReference type="TAIR" id="AT1G30900">
    <property type="gene designation" value="VSR6"/>
</dbReference>
<dbReference type="eggNOG" id="ENOG502QQUF">
    <property type="taxonomic scope" value="Eukaryota"/>
</dbReference>
<dbReference type="HOGENOM" id="CLU_031082_1_0_1"/>
<dbReference type="InParanoid" id="Q9FYH7"/>
<dbReference type="OMA" id="VHAEAQP"/>
<dbReference type="OrthoDB" id="10045365at2759"/>
<dbReference type="PRO" id="PR:Q9FYH7"/>
<dbReference type="Proteomes" id="UP000006548">
    <property type="component" value="Chromosome 1"/>
</dbReference>
<dbReference type="ExpressionAtlas" id="Q9FYH7">
    <property type="expression patterns" value="baseline and differential"/>
</dbReference>
<dbReference type="GO" id="GO:0030665">
    <property type="term" value="C:clathrin-coated vesicle membrane"/>
    <property type="evidence" value="ECO:0007669"/>
    <property type="project" value="UniProtKB-SubCell"/>
</dbReference>
<dbReference type="GO" id="GO:0000139">
    <property type="term" value="C:Golgi membrane"/>
    <property type="evidence" value="ECO:0007669"/>
    <property type="project" value="UniProtKB-SubCell"/>
</dbReference>
<dbReference type="GO" id="GO:0005509">
    <property type="term" value="F:calcium ion binding"/>
    <property type="evidence" value="ECO:0007669"/>
    <property type="project" value="InterPro"/>
</dbReference>
<dbReference type="GO" id="GO:0015031">
    <property type="term" value="P:protein transport"/>
    <property type="evidence" value="ECO:0007669"/>
    <property type="project" value="UniProtKB-KW"/>
</dbReference>
<dbReference type="CDD" id="cd00054">
    <property type="entry name" value="EGF_CA"/>
    <property type="match status" value="1"/>
</dbReference>
<dbReference type="FunFam" id="3.50.30.30:FF:000001">
    <property type="entry name" value="Vacuolar-sorting receptor 1"/>
    <property type="match status" value="1"/>
</dbReference>
<dbReference type="FunFam" id="2.10.25.10:FF:000178">
    <property type="entry name" value="vacuolar-sorting receptor 1"/>
    <property type="match status" value="1"/>
</dbReference>
<dbReference type="Gene3D" id="3.50.30.30">
    <property type="match status" value="1"/>
</dbReference>
<dbReference type="Gene3D" id="2.10.25.10">
    <property type="entry name" value="Laminin"/>
    <property type="match status" value="2"/>
</dbReference>
<dbReference type="InterPro" id="IPR026823">
    <property type="entry name" value="cEGF"/>
</dbReference>
<dbReference type="InterPro" id="IPR001881">
    <property type="entry name" value="EGF-like_Ca-bd_dom"/>
</dbReference>
<dbReference type="InterPro" id="IPR018097">
    <property type="entry name" value="EGF_Ca-bd_CS"/>
</dbReference>
<dbReference type="InterPro" id="IPR046450">
    <property type="entry name" value="PA_dom_sf"/>
</dbReference>
<dbReference type="InterPro" id="IPR003137">
    <property type="entry name" value="PA_domain"/>
</dbReference>
<dbReference type="InterPro" id="IPR056858">
    <property type="entry name" value="VSR_TRX"/>
</dbReference>
<dbReference type="PANTHER" id="PTHR22702">
    <property type="entry name" value="PROTEASE-ASSOCIATED DOMAIN-CONTAINING PROTEIN"/>
    <property type="match status" value="1"/>
</dbReference>
<dbReference type="PANTHER" id="PTHR22702:SF4">
    <property type="entry name" value="VACUOLAR-SORTING RECEPTOR 6-LIKE"/>
    <property type="match status" value="1"/>
</dbReference>
<dbReference type="Pfam" id="PF12662">
    <property type="entry name" value="cEGF"/>
    <property type="match status" value="1"/>
</dbReference>
<dbReference type="Pfam" id="PF02225">
    <property type="entry name" value="PA"/>
    <property type="match status" value="1"/>
</dbReference>
<dbReference type="Pfam" id="PF25011">
    <property type="entry name" value="VSR_TRX"/>
    <property type="match status" value="1"/>
</dbReference>
<dbReference type="SMART" id="SM00179">
    <property type="entry name" value="EGF_CA"/>
    <property type="match status" value="1"/>
</dbReference>
<dbReference type="SUPFAM" id="SSF52025">
    <property type="entry name" value="PA domain"/>
    <property type="match status" value="1"/>
</dbReference>
<dbReference type="PROSITE" id="PS00010">
    <property type="entry name" value="ASX_HYDROXYL"/>
    <property type="match status" value="1"/>
</dbReference>
<dbReference type="PROSITE" id="PS00022">
    <property type="entry name" value="EGF_1"/>
    <property type="match status" value="1"/>
</dbReference>
<dbReference type="PROSITE" id="PS01186">
    <property type="entry name" value="EGF_2"/>
    <property type="match status" value="1"/>
</dbReference>
<dbReference type="PROSITE" id="PS01187">
    <property type="entry name" value="EGF_CA"/>
    <property type="match status" value="1"/>
</dbReference>
<evidence type="ECO:0000250" key="1"/>
<evidence type="ECO:0000255" key="2"/>
<evidence type="ECO:0000256" key="3">
    <source>
        <dbReference type="SAM" id="MobiDB-lite"/>
    </source>
</evidence>
<evidence type="ECO:0000269" key="4">
    <source>
    </source>
</evidence>
<evidence type="ECO:0000305" key="5"/>
<evidence type="ECO:0000305" key="6">
    <source>
    </source>
</evidence>
<keyword id="KW-0106">Calcium</keyword>
<keyword id="KW-0968">Cytoplasmic vesicle</keyword>
<keyword id="KW-1015">Disulfide bond</keyword>
<keyword id="KW-0245">EGF-like domain</keyword>
<keyword id="KW-0325">Glycoprotein</keyword>
<keyword id="KW-0333">Golgi apparatus</keyword>
<keyword id="KW-0472">Membrane</keyword>
<keyword id="KW-0653">Protein transport</keyword>
<keyword id="KW-1185">Reference proteome</keyword>
<keyword id="KW-0677">Repeat</keyword>
<keyword id="KW-0732">Signal</keyword>
<keyword id="KW-0812">Transmembrane</keyword>
<keyword id="KW-1133">Transmembrane helix</keyword>
<keyword id="KW-0813">Transport</keyword>
<feature type="signal peptide" evidence="2">
    <location>
        <begin position="1"/>
        <end position="25"/>
    </location>
</feature>
<feature type="chain" id="PRO_0000036468" description="Vacuolar-sorting receptor 6">
    <location>
        <begin position="26"/>
        <end position="631"/>
    </location>
</feature>
<feature type="topological domain" description="Lumenal" evidence="2">
    <location>
        <begin position="26"/>
        <end position="563"/>
    </location>
</feature>
<feature type="transmembrane region" description="Helical" evidence="2">
    <location>
        <begin position="564"/>
        <end position="584"/>
    </location>
</feature>
<feature type="topological domain" description="Cytoplasmic" evidence="2">
    <location>
        <begin position="585"/>
        <end position="631"/>
    </location>
</feature>
<feature type="domain" description="PA">
    <location>
        <begin position="57"/>
        <end position="165"/>
    </location>
</feature>
<feature type="domain" description="EGF-like 1">
    <location>
        <begin position="413"/>
        <end position="463"/>
    </location>
</feature>
<feature type="domain" description="EGF-like 2">
    <location>
        <begin position="494"/>
        <end position="540"/>
    </location>
</feature>
<feature type="region of interest" description="Disordered" evidence="3">
    <location>
        <begin position="610"/>
        <end position="631"/>
    </location>
</feature>
<feature type="short sequence motif" description="Tyrosine-based internalization motif" evidence="1">
    <location>
        <begin position="604"/>
        <end position="607"/>
    </location>
</feature>
<feature type="glycosylation site" description="N-linked (GlcNAc...) asparagine" evidence="2">
    <location>
        <position position="294"/>
    </location>
</feature>
<feature type="glycosylation site" description="N-linked (GlcNAc...) asparagine" evidence="2">
    <location>
        <position position="431"/>
    </location>
</feature>
<feature type="disulfide bond" evidence="1">
    <location>
        <begin position="417"/>
        <end position="435"/>
    </location>
</feature>
<feature type="disulfide bond" evidence="1">
    <location>
        <begin position="424"/>
        <end position="444"/>
    </location>
</feature>
<feature type="disulfide bond" evidence="1">
    <location>
        <begin position="446"/>
        <end position="462"/>
    </location>
</feature>
<feature type="disulfide bond" evidence="1">
    <location>
        <begin position="498"/>
        <end position="511"/>
    </location>
</feature>
<feature type="disulfide bond" evidence="1">
    <location>
        <begin position="530"/>
        <end position="539"/>
    </location>
</feature>